<feature type="chain" id="PRO_0000051270" description="Transducin beta-like protein 2">
    <location>
        <begin position="1"/>
        <end position="447"/>
    </location>
</feature>
<feature type="repeat" description="WD 1">
    <location>
        <begin position="88"/>
        <end position="127"/>
    </location>
</feature>
<feature type="repeat" description="WD 2">
    <location>
        <begin position="134"/>
        <end position="174"/>
    </location>
</feature>
<feature type="repeat" description="WD 3">
    <location>
        <begin position="186"/>
        <end position="226"/>
    </location>
</feature>
<feature type="repeat" description="WD 4">
    <location>
        <begin position="228"/>
        <end position="267"/>
    </location>
</feature>
<feature type="repeat" description="WD 5">
    <location>
        <begin position="277"/>
        <end position="316"/>
    </location>
</feature>
<feature type="repeat" description="WD 6">
    <location>
        <begin position="329"/>
        <end position="367"/>
    </location>
</feature>
<feature type="repeat" description="WD 7">
    <location>
        <begin position="371"/>
        <end position="409"/>
    </location>
</feature>
<feature type="region of interest" description="Disordered" evidence="1">
    <location>
        <begin position="38"/>
        <end position="72"/>
    </location>
</feature>
<feature type="compositionally biased region" description="Basic residues" evidence="1">
    <location>
        <begin position="57"/>
        <end position="69"/>
    </location>
</feature>
<feature type="modified residue" description="Phosphothreonine; by ATM or ATR" evidence="3">
    <location>
        <position position="433"/>
    </location>
</feature>
<feature type="cross-link" description="Glycyl lysine isopeptide (Lys-Gly) (interchain with G-Cter in SUMO2)" evidence="4">
    <location>
        <position position="168"/>
    </location>
</feature>
<feature type="sequence variant" id="VAR_053420" description="In dbSNP:rs35607697.">
    <original>V</original>
    <variation>I</variation>
    <location>
        <position position="345"/>
    </location>
</feature>
<keyword id="KW-1017">Isopeptide bond</keyword>
<keyword id="KW-0597">Phosphoprotein</keyword>
<keyword id="KW-1267">Proteomics identification</keyword>
<keyword id="KW-1185">Reference proteome</keyword>
<keyword id="KW-0677">Repeat</keyword>
<keyword id="KW-0832">Ubl conjugation</keyword>
<keyword id="KW-0853">WD repeat</keyword>
<keyword id="KW-0856">Williams-Beuren syndrome</keyword>
<evidence type="ECO:0000256" key="1">
    <source>
        <dbReference type="SAM" id="MobiDB-lite"/>
    </source>
</evidence>
<evidence type="ECO:0000305" key="2"/>
<evidence type="ECO:0007744" key="3">
    <source>
    </source>
</evidence>
<evidence type="ECO:0007744" key="4">
    <source>
    </source>
</evidence>
<sequence>MELSQMSELMGLSVLLGLLALMATAAVARGWLRAGEERSGRPACQKANGFPPDKSSGSKKQKQYQRIRKEKPQQHNFTHRLLAAALKSHSGNISCMDFSSNGKYLATCADDRTIRIWSTKDFLQREHRSMRANVELDHATLVRFSPDCRAFIVWLANGDTLRVFKMTKREDGGYTFTATPEDFPKKHKAPVIDIGIANTGKFIMTASSDTTVLIWSLKGQVLSTINTNQMNNTHAAVSPCGRFVASCGFTPDVKVWEVCFGKKGEFQEVVRAFELKGHSAAVHSFAFSNDSRRMASVSKDGTWKLWDTDVEYKKKQDPYLLKTGRFEEAAGAAPCRLALSPNAQVLALASGSSIHLYNTRRGEKEECFERVHGECIANLSFDITGRFLASCGDRAVRLFHNTPGHRAMVEEMQGHLKRASNESTRQRLQQQLTQAQETLKSLGALKK</sequence>
<name>TBL2_HUMAN</name>
<proteinExistence type="evidence at protein level"/>
<gene>
    <name type="primary">TBL2</name>
    <name type="synonym">WBSCR13</name>
    <name type="ORF">UNQ563/PRO1125</name>
</gene>
<reference key="1">
    <citation type="journal article" date="1999" name="Cytogenet. Cell Genet.">
        <title>TBL2, a novel transducin family member in the WBS deletion: characterization of the complete sequence, genomic structure, transcriptional variants and the mouse ortholog.</title>
        <authorList>
            <person name="Perez Jurado L.A."/>
            <person name="Wang Y.-K."/>
            <person name="Francke U."/>
            <person name="Cruces J."/>
        </authorList>
    </citation>
    <scope>NUCLEOTIDE SEQUENCE [GENOMIC DNA / MRNA]</scope>
</reference>
<reference key="2">
    <citation type="journal article" date="2001" name="Genome Res.">
        <title>Towards a catalog of human genes and proteins: sequencing and analysis of 500 novel complete protein coding human cDNAs.</title>
        <authorList>
            <person name="Wiemann S."/>
            <person name="Weil B."/>
            <person name="Wellenreuther R."/>
            <person name="Gassenhuber J."/>
            <person name="Glassl S."/>
            <person name="Ansorge W."/>
            <person name="Boecher M."/>
            <person name="Bloecker H."/>
            <person name="Bauersachs S."/>
            <person name="Blum H."/>
            <person name="Lauber J."/>
            <person name="Duesterhoeft A."/>
            <person name="Beyer A."/>
            <person name="Koehrer K."/>
            <person name="Strack N."/>
            <person name="Mewes H.-W."/>
            <person name="Ottenwaelder B."/>
            <person name="Obermaier B."/>
            <person name="Tampe J."/>
            <person name="Heubner D."/>
            <person name="Wambutt R."/>
            <person name="Korn B."/>
            <person name="Klein M."/>
            <person name="Poustka A."/>
        </authorList>
    </citation>
    <scope>NUCLEOTIDE SEQUENCE [LARGE SCALE MRNA]</scope>
    <source>
        <tissue>Testis</tissue>
    </source>
</reference>
<reference key="3">
    <citation type="journal article" date="2003" name="Genome Res.">
        <title>The secreted protein discovery initiative (SPDI), a large-scale effort to identify novel human secreted and transmembrane proteins: a bioinformatics assessment.</title>
        <authorList>
            <person name="Clark H.F."/>
            <person name="Gurney A.L."/>
            <person name="Abaya E."/>
            <person name="Baker K."/>
            <person name="Baldwin D.T."/>
            <person name="Brush J."/>
            <person name="Chen J."/>
            <person name="Chow B."/>
            <person name="Chui C."/>
            <person name="Crowley C."/>
            <person name="Currell B."/>
            <person name="Deuel B."/>
            <person name="Dowd P."/>
            <person name="Eaton D."/>
            <person name="Foster J.S."/>
            <person name="Grimaldi C."/>
            <person name="Gu Q."/>
            <person name="Hass P.E."/>
            <person name="Heldens S."/>
            <person name="Huang A."/>
            <person name="Kim H.S."/>
            <person name="Klimowski L."/>
            <person name="Jin Y."/>
            <person name="Johnson S."/>
            <person name="Lee J."/>
            <person name="Lewis L."/>
            <person name="Liao D."/>
            <person name="Mark M.R."/>
            <person name="Robbie E."/>
            <person name="Sanchez C."/>
            <person name="Schoenfeld J."/>
            <person name="Seshagiri S."/>
            <person name="Simmons L."/>
            <person name="Singh J."/>
            <person name="Smith V."/>
            <person name="Stinson J."/>
            <person name="Vagts A."/>
            <person name="Vandlen R.L."/>
            <person name="Watanabe C."/>
            <person name="Wieand D."/>
            <person name="Woods K."/>
            <person name="Xie M.-H."/>
            <person name="Yansura D.G."/>
            <person name="Yi S."/>
            <person name="Yu G."/>
            <person name="Yuan J."/>
            <person name="Zhang M."/>
            <person name="Zhang Z."/>
            <person name="Goddard A.D."/>
            <person name="Wood W.I."/>
            <person name="Godowski P.J."/>
            <person name="Gray A.M."/>
        </authorList>
    </citation>
    <scope>NUCLEOTIDE SEQUENCE [LARGE SCALE MRNA]</scope>
</reference>
<reference key="4">
    <citation type="journal article" date="1998" name="Hum. Genet.">
        <title>Complete physical map of the common deletion region in Williams syndrome and identification and characterization of three novel genes.</title>
        <authorList>
            <person name="Meng X."/>
            <person name="Lu X."/>
            <person name="Li Z."/>
            <person name="Green E.D."/>
            <person name="Massa H."/>
            <person name="Trask B.J."/>
            <person name="Morris C.A."/>
            <person name="Keating M.T."/>
        </authorList>
    </citation>
    <scope>NUCLEOTIDE SEQUENCE [MRNA] OF 14-447</scope>
</reference>
<reference key="5">
    <citation type="journal article" date="2007" name="Science">
        <title>ATM and ATR substrate analysis reveals extensive protein networks responsive to DNA damage.</title>
        <authorList>
            <person name="Matsuoka S."/>
            <person name="Ballif B.A."/>
            <person name="Smogorzewska A."/>
            <person name="McDonald E.R. III"/>
            <person name="Hurov K.E."/>
            <person name="Luo J."/>
            <person name="Bakalarski C.E."/>
            <person name="Zhao Z."/>
            <person name="Solimini N."/>
            <person name="Lerenthal Y."/>
            <person name="Shiloh Y."/>
            <person name="Gygi S.P."/>
            <person name="Elledge S.J."/>
        </authorList>
    </citation>
    <scope>PHOSPHORYLATION [LARGE SCALE ANALYSIS] AT THR-433</scope>
    <scope>IDENTIFICATION BY MASS SPECTROMETRY [LARGE SCALE ANALYSIS]</scope>
    <source>
        <tissue>Embryonic kidney</tissue>
    </source>
</reference>
<reference key="6">
    <citation type="journal article" date="2011" name="BMC Syst. Biol.">
        <title>Initial characterization of the human central proteome.</title>
        <authorList>
            <person name="Burkard T.R."/>
            <person name="Planyavsky M."/>
            <person name="Kaupe I."/>
            <person name="Breitwieser F.P."/>
            <person name="Buerckstuemmer T."/>
            <person name="Bennett K.L."/>
            <person name="Superti-Furga G."/>
            <person name="Colinge J."/>
        </authorList>
    </citation>
    <scope>IDENTIFICATION BY MASS SPECTROMETRY [LARGE SCALE ANALYSIS]</scope>
</reference>
<reference key="7">
    <citation type="journal article" date="2014" name="J. Proteomics">
        <title>An enzyme assisted RP-RPLC approach for in-depth analysis of human liver phosphoproteome.</title>
        <authorList>
            <person name="Bian Y."/>
            <person name="Song C."/>
            <person name="Cheng K."/>
            <person name="Dong M."/>
            <person name="Wang F."/>
            <person name="Huang J."/>
            <person name="Sun D."/>
            <person name="Wang L."/>
            <person name="Ye M."/>
            <person name="Zou H."/>
        </authorList>
    </citation>
    <scope>IDENTIFICATION BY MASS SPECTROMETRY [LARGE SCALE ANALYSIS]</scope>
    <source>
        <tissue>Liver</tissue>
    </source>
</reference>
<reference key="8">
    <citation type="journal article" date="2015" name="Proteomics">
        <title>N-terminome analysis of the human mitochondrial proteome.</title>
        <authorList>
            <person name="Vaca Jacome A.S."/>
            <person name="Rabilloud T."/>
            <person name="Schaeffer-Reiss C."/>
            <person name="Rompais M."/>
            <person name="Ayoub D."/>
            <person name="Lane L."/>
            <person name="Bairoch A."/>
            <person name="Van Dorsselaer A."/>
            <person name="Carapito C."/>
        </authorList>
    </citation>
    <scope>IDENTIFICATION BY MASS SPECTROMETRY [LARGE SCALE ANALYSIS]</scope>
</reference>
<reference key="9">
    <citation type="journal article" date="2017" name="Nat. Struct. Mol. Biol.">
        <title>Site-specific mapping of the human SUMO proteome reveals co-modification with phosphorylation.</title>
        <authorList>
            <person name="Hendriks I.A."/>
            <person name="Lyon D."/>
            <person name="Young C."/>
            <person name="Jensen L.J."/>
            <person name="Vertegaal A.C."/>
            <person name="Nielsen M.L."/>
        </authorList>
    </citation>
    <scope>SUMOYLATION [LARGE SCALE ANALYSIS] AT LYS-168</scope>
    <scope>IDENTIFICATION BY MASS SPECTROMETRY [LARGE SCALE ANALYSIS]</scope>
</reference>
<accession>Q9Y4P3</accession>
<accession>Q9UQE2</accession>
<organism>
    <name type="scientific">Homo sapiens</name>
    <name type="common">Human</name>
    <dbReference type="NCBI Taxonomy" id="9606"/>
    <lineage>
        <taxon>Eukaryota</taxon>
        <taxon>Metazoa</taxon>
        <taxon>Chordata</taxon>
        <taxon>Craniata</taxon>
        <taxon>Vertebrata</taxon>
        <taxon>Euteleostomi</taxon>
        <taxon>Mammalia</taxon>
        <taxon>Eutheria</taxon>
        <taxon>Euarchontoglires</taxon>
        <taxon>Primates</taxon>
        <taxon>Haplorrhini</taxon>
        <taxon>Catarrhini</taxon>
        <taxon>Hominidae</taxon>
        <taxon>Homo</taxon>
    </lineage>
</organism>
<dbReference type="EMBL" id="AF097484">
    <property type="protein sequence ID" value="AAF06823.1"/>
    <property type="molecule type" value="mRNA"/>
</dbReference>
<dbReference type="EMBL" id="AF097485">
    <property type="protein sequence ID" value="AAF06824.1"/>
    <property type="molecule type" value="Genomic_DNA"/>
</dbReference>
<dbReference type="EMBL" id="AL080162">
    <property type="protein sequence ID" value="CAB45751.1"/>
    <property type="molecule type" value="mRNA"/>
</dbReference>
<dbReference type="EMBL" id="AY358518">
    <property type="protein sequence ID" value="AAQ88882.1"/>
    <property type="molecule type" value="mRNA"/>
</dbReference>
<dbReference type="EMBL" id="AF056183">
    <property type="protein sequence ID" value="AAD28083.1"/>
    <property type="status" value="ALT_INIT"/>
    <property type="molecule type" value="mRNA"/>
</dbReference>
<dbReference type="CCDS" id="CCDS5551.1"/>
<dbReference type="PIR" id="T12544">
    <property type="entry name" value="T12544"/>
</dbReference>
<dbReference type="RefSeq" id="NP_036585.1">
    <property type="nucleotide sequence ID" value="NM_012453.4"/>
</dbReference>
<dbReference type="SMR" id="Q9Y4P3"/>
<dbReference type="BioGRID" id="117762">
    <property type="interactions" value="238"/>
</dbReference>
<dbReference type="FunCoup" id="Q9Y4P3">
    <property type="interactions" value="1469"/>
</dbReference>
<dbReference type="IntAct" id="Q9Y4P3">
    <property type="interactions" value="76"/>
</dbReference>
<dbReference type="MINT" id="Q9Y4P3"/>
<dbReference type="STRING" id="9606.ENSP00000307260"/>
<dbReference type="GlyGen" id="Q9Y4P3">
    <property type="glycosylation" value="4 sites, 3 N-linked glycans (3 sites), 1 O-linked glycan (1 site)"/>
</dbReference>
<dbReference type="iPTMnet" id="Q9Y4P3"/>
<dbReference type="PhosphoSitePlus" id="Q9Y4P3"/>
<dbReference type="SwissPalm" id="Q9Y4P3"/>
<dbReference type="BioMuta" id="TBL2"/>
<dbReference type="jPOST" id="Q9Y4P3"/>
<dbReference type="MassIVE" id="Q9Y4P3"/>
<dbReference type="PaxDb" id="9606-ENSP00000307260"/>
<dbReference type="PeptideAtlas" id="Q9Y4P3"/>
<dbReference type="ProteomicsDB" id="86235"/>
<dbReference type="Pumba" id="Q9Y4P3"/>
<dbReference type="Antibodypedia" id="2315">
    <property type="antibodies" value="192 antibodies from 27 providers"/>
</dbReference>
<dbReference type="DNASU" id="26608"/>
<dbReference type="Ensembl" id="ENST00000305632.11">
    <property type="protein sequence ID" value="ENSP00000307260.4"/>
    <property type="gene ID" value="ENSG00000106638.18"/>
</dbReference>
<dbReference type="GeneID" id="26608"/>
<dbReference type="KEGG" id="hsa:26608"/>
<dbReference type="MANE-Select" id="ENST00000305632.11">
    <property type="protein sequence ID" value="ENSP00000307260.4"/>
    <property type="RefSeq nucleotide sequence ID" value="NM_012453.4"/>
    <property type="RefSeq protein sequence ID" value="NP_036585.1"/>
</dbReference>
<dbReference type="UCSC" id="uc003tyh.5">
    <property type="organism name" value="human"/>
</dbReference>
<dbReference type="AGR" id="HGNC:11586"/>
<dbReference type="CTD" id="26608"/>
<dbReference type="DisGeNET" id="26608"/>
<dbReference type="GeneCards" id="TBL2"/>
<dbReference type="HGNC" id="HGNC:11586">
    <property type="gene designation" value="TBL2"/>
</dbReference>
<dbReference type="HPA" id="ENSG00000106638">
    <property type="expression patterns" value="Tissue enhanced (testis)"/>
</dbReference>
<dbReference type="MalaCards" id="TBL2"/>
<dbReference type="MIM" id="605842">
    <property type="type" value="gene"/>
</dbReference>
<dbReference type="neXtProt" id="NX_Q9Y4P3"/>
<dbReference type="OpenTargets" id="ENSG00000106638"/>
<dbReference type="Orphanet" id="904">
    <property type="disease" value="Williams syndrome"/>
</dbReference>
<dbReference type="PharmGKB" id="PA36350"/>
<dbReference type="VEuPathDB" id="HostDB:ENSG00000106638"/>
<dbReference type="eggNOG" id="KOG2096">
    <property type="taxonomic scope" value="Eukaryota"/>
</dbReference>
<dbReference type="GeneTree" id="ENSGT00390000013836"/>
<dbReference type="InParanoid" id="Q9Y4P3"/>
<dbReference type="OMA" id="WDINVRY"/>
<dbReference type="OrthoDB" id="346371at2759"/>
<dbReference type="PAN-GO" id="Q9Y4P3">
    <property type="GO annotations" value="2 GO annotations based on evolutionary models"/>
</dbReference>
<dbReference type="PhylomeDB" id="Q9Y4P3"/>
<dbReference type="TreeFam" id="TF315054"/>
<dbReference type="PathwayCommons" id="Q9Y4P3"/>
<dbReference type="SignaLink" id="Q9Y4P3"/>
<dbReference type="BioGRID-ORCS" id="26608">
    <property type="hits" value="15 hits in 1156 CRISPR screens"/>
</dbReference>
<dbReference type="GenomeRNAi" id="26608"/>
<dbReference type="Pharos" id="Q9Y4P3">
    <property type="development level" value="Tbio"/>
</dbReference>
<dbReference type="PRO" id="PR:Q9Y4P3"/>
<dbReference type="Proteomes" id="UP000005640">
    <property type="component" value="Chromosome 7"/>
</dbReference>
<dbReference type="RNAct" id="Q9Y4P3">
    <property type="molecule type" value="protein"/>
</dbReference>
<dbReference type="Bgee" id="ENSG00000106638">
    <property type="expression patterns" value="Expressed in adult organism and 209 other cell types or tissues"/>
</dbReference>
<dbReference type="ExpressionAtlas" id="Q9Y4P3">
    <property type="expression patterns" value="baseline and differential"/>
</dbReference>
<dbReference type="GO" id="GO:0005783">
    <property type="term" value="C:endoplasmic reticulum"/>
    <property type="evidence" value="ECO:0000314"/>
    <property type="project" value="ParkinsonsUK-UCL"/>
</dbReference>
<dbReference type="GO" id="GO:0005789">
    <property type="term" value="C:endoplasmic reticulum membrane"/>
    <property type="evidence" value="ECO:0000303"/>
    <property type="project" value="ParkinsonsUK-UCL"/>
</dbReference>
<dbReference type="GO" id="GO:0051219">
    <property type="term" value="F:phosphoprotein binding"/>
    <property type="evidence" value="ECO:0000314"/>
    <property type="project" value="ParkinsonsUK-UCL"/>
</dbReference>
<dbReference type="GO" id="GO:0019901">
    <property type="term" value="F:protein kinase binding"/>
    <property type="evidence" value="ECO:0000353"/>
    <property type="project" value="ParkinsonsUK-UCL"/>
</dbReference>
<dbReference type="GO" id="GO:0003723">
    <property type="term" value="F:RNA binding"/>
    <property type="evidence" value="ECO:0007005"/>
    <property type="project" value="UniProtKB"/>
</dbReference>
<dbReference type="GO" id="GO:0031369">
    <property type="term" value="F:translation initiation factor binding"/>
    <property type="evidence" value="ECO:0000353"/>
    <property type="project" value="ParkinsonsUK-UCL"/>
</dbReference>
<dbReference type="GO" id="GO:0042149">
    <property type="term" value="P:cellular response to glucose starvation"/>
    <property type="evidence" value="ECO:0000315"/>
    <property type="project" value="ParkinsonsUK-UCL"/>
</dbReference>
<dbReference type="GO" id="GO:0071456">
    <property type="term" value="P:cellular response to hypoxia"/>
    <property type="evidence" value="ECO:0000315"/>
    <property type="project" value="ParkinsonsUK-UCL"/>
</dbReference>
<dbReference type="GO" id="GO:0030968">
    <property type="term" value="P:endoplasmic reticulum unfolded protein response"/>
    <property type="evidence" value="ECO:0000315"/>
    <property type="project" value="ParkinsonsUK-UCL"/>
</dbReference>
<dbReference type="FunFam" id="2.130.10.10:FF:000659">
    <property type="entry name" value="Transducin beta-like protein 2"/>
    <property type="match status" value="1"/>
</dbReference>
<dbReference type="FunFam" id="2.130.10.10:FF:001285">
    <property type="entry name" value="Transducin beta-like protein 2"/>
    <property type="match status" value="1"/>
</dbReference>
<dbReference type="Gene3D" id="2.130.10.10">
    <property type="entry name" value="YVTN repeat-like/Quinoprotein amine dehydrogenase"/>
    <property type="match status" value="3"/>
</dbReference>
<dbReference type="InterPro" id="IPR020472">
    <property type="entry name" value="G-protein_beta_WD-40_rep"/>
</dbReference>
<dbReference type="InterPro" id="IPR042410">
    <property type="entry name" value="WBSCR13"/>
</dbReference>
<dbReference type="InterPro" id="IPR015943">
    <property type="entry name" value="WD40/YVTN_repeat-like_dom_sf"/>
</dbReference>
<dbReference type="InterPro" id="IPR036322">
    <property type="entry name" value="WD40_repeat_dom_sf"/>
</dbReference>
<dbReference type="InterPro" id="IPR001680">
    <property type="entry name" value="WD40_rpt"/>
</dbReference>
<dbReference type="PANTHER" id="PTHR44321">
    <property type="entry name" value="TRANSDUCIN BETA-LIKE PROTEIN 2"/>
    <property type="match status" value="1"/>
</dbReference>
<dbReference type="PANTHER" id="PTHR44321:SF1">
    <property type="entry name" value="TRANSDUCIN BETA-LIKE PROTEIN 2"/>
    <property type="match status" value="1"/>
</dbReference>
<dbReference type="Pfam" id="PF00400">
    <property type="entry name" value="WD40"/>
    <property type="match status" value="4"/>
</dbReference>
<dbReference type="PRINTS" id="PR00320">
    <property type="entry name" value="GPROTEINBRPT"/>
</dbReference>
<dbReference type="SMART" id="SM00320">
    <property type="entry name" value="WD40"/>
    <property type="match status" value="5"/>
</dbReference>
<dbReference type="SUPFAM" id="SSF50978">
    <property type="entry name" value="WD40 repeat-like"/>
    <property type="match status" value="1"/>
</dbReference>
<dbReference type="PROSITE" id="PS00678">
    <property type="entry name" value="WD_REPEATS_1"/>
    <property type="match status" value="1"/>
</dbReference>
<dbReference type="PROSITE" id="PS50082">
    <property type="entry name" value="WD_REPEATS_2"/>
    <property type="match status" value="3"/>
</dbReference>
<dbReference type="PROSITE" id="PS50294">
    <property type="entry name" value="WD_REPEATS_REGION"/>
    <property type="match status" value="1"/>
</dbReference>
<comment type="interaction">
    <interactant intactId="EBI-2513719">
        <id>Q9Y4P3</id>
    </interactant>
    <interactant intactId="EBI-717097">
        <id>O15530</id>
        <label>PDPK1</label>
    </interactant>
    <organismsDiffer>false</organismsDiffer>
    <experiments>3</experiments>
</comment>
<comment type="disease">
    <text>TBL2 is located in the Williams-Beuren syndrome (WBS) critical region. WBS results from a hemizygous deletion of several genes on chromosome 7q11.23, thought to arise as a consequence of unequal crossing over between highly homologous low-copy repeat sequences flanking the deleted region. Haploinsufficiency of TBL2 may be the cause of certain cardiovascular and musculo-skeletal abnormalities observed in the disease.</text>
</comment>
<comment type="sequence caution" evidence="2">
    <conflict type="erroneous initiation">
        <sequence resource="EMBL-CDS" id="AAD28083"/>
    </conflict>
</comment>
<protein>
    <recommendedName>
        <fullName>Transducin beta-like protein 2</fullName>
    </recommendedName>
    <alternativeName>
        <fullName>WS beta-transducin repeats protein</fullName>
        <shortName>WS-betaTRP</shortName>
    </alternativeName>
    <alternativeName>
        <fullName>Williams-Beuren syndrome chromosomal region 13 protein</fullName>
    </alternativeName>
</protein>